<keyword id="KW-0560">Oxidoreductase</keyword>
<keyword id="KW-1185">Reference proteome</keyword>
<name>MSRA1_SYNY3</name>
<comment type="function">
    <text evidence="1">Has an important function as a repair enzyme for proteins that have been inactivated by oxidation. Catalyzes the reversible oxidation-reduction of methionine sulfoxide in proteins to methionine (By similarity).</text>
</comment>
<comment type="catalytic activity">
    <reaction>
        <text>L-methionyl-[protein] + [thioredoxin]-disulfide + H2O = L-methionyl-(S)-S-oxide-[protein] + [thioredoxin]-dithiol</text>
        <dbReference type="Rhea" id="RHEA:14217"/>
        <dbReference type="Rhea" id="RHEA-COMP:10698"/>
        <dbReference type="Rhea" id="RHEA-COMP:10700"/>
        <dbReference type="Rhea" id="RHEA-COMP:12313"/>
        <dbReference type="Rhea" id="RHEA-COMP:12315"/>
        <dbReference type="ChEBI" id="CHEBI:15377"/>
        <dbReference type="ChEBI" id="CHEBI:16044"/>
        <dbReference type="ChEBI" id="CHEBI:29950"/>
        <dbReference type="ChEBI" id="CHEBI:44120"/>
        <dbReference type="ChEBI" id="CHEBI:50058"/>
        <dbReference type="EC" id="1.8.4.11"/>
    </reaction>
</comment>
<comment type="catalytic activity">
    <reaction>
        <text>[thioredoxin]-disulfide + L-methionine + H2O = L-methionine (S)-S-oxide + [thioredoxin]-dithiol</text>
        <dbReference type="Rhea" id="RHEA:19993"/>
        <dbReference type="Rhea" id="RHEA-COMP:10698"/>
        <dbReference type="Rhea" id="RHEA-COMP:10700"/>
        <dbReference type="ChEBI" id="CHEBI:15377"/>
        <dbReference type="ChEBI" id="CHEBI:29950"/>
        <dbReference type="ChEBI" id="CHEBI:50058"/>
        <dbReference type="ChEBI" id="CHEBI:57844"/>
        <dbReference type="ChEBI" id="CHEBI:58772"/>
        <dbReference type="EC" id="1.8.4.11"/>
    </reaction>
</comment>
<comment type="similarity">
    <text evidence="2">Belongs to the MsrA Met sulfoxide reductase family.</text>
</comment>
<organism>
    <name type="scientific">Synechocystis sp. (strain ATCC 27184 / PCC 6803 / Kazusa)</name>
    <dbReference type="NCBI Taxonomy" id="1111708"/>
    <lineage>
        <taxon>Bacteria</taxon>
        <taxon>Bacillati</taxon>
        <taxon>Cyanobacteriota</taxon>
        <taxon>Cyanophyceae</taxon>
        <taxon>Synechococcales</taxon>
        <taxon>Merismopediaceae</taxon>
        <taxon>Synechocystis</taxon>
    </lineage>
</organism>
<sequence length="222" mass="24209">MGFFDLFGKKTAMVAPNEALPGRSATMPVPDKHFVNGNPLKAPFPQGMETALFGLGCFWGAERKFWQIPGVYSTAVGYAAGYTPNPTYQEVCTGMTGHNEVVLVAFDPQQVSYDQLLKVFWESHNPTQGMRQGNDVGTQYRSGIYTYSEAQQQAALASKQAYQQALQQAGYGEITTEILPAPDFYYAEDYHQQYLAKNPNGYCGLGGTNVACPIGTEVSLGA</sequence>
<accession>P72622</accession>
<reference key="1">
    <citation type="journal article" date="1996" name="DNA Res.">
        <title>Sequence analysis of the genome of the unicellular cyanobacterium Synechocystis sp. strain PCC6803. II. Sequence determination of the entire genome and assignment of potential protein-coding regions.</title>
        <authorList>
            <person name="Kaneko T."/>
            <person name="Sato S."/>
            <person name="Kotani H."/>
            <person name="Tanaka A."/>
            <person name="Asamizu E."/>
            <person name="Nakamura Y."/>
            <person name="Miyajima N."/>
            <person name="Hirosawa M."/>
            <person name="Sugiura M."/>
            <person name="Sasamoto S."/>
            <person name="Kimura T."/>
            <person name="Hosouchi T."/>
            <person name="Matsuno A."/>
            <person name="Muraki A."/>
            <person name="Nakazaki N."/>
            <person name="Naruo K."/>
            <person name="Okumura S."/>
            <person name="Shimpo S."/>
            <person name="Takeuchi C."/>
            <person name="Wada T."/>
            <person name="Watanabe A."/>
            <person name="Yamada M."/>
            <person name="Yasuda M."/>
            <person name="Tabata S."/>
        </authorList>
    </citation>
    <scope>NUCLEOTIDE SEQUENCE [LARGE SCALE GENOMIC DNA]</scope>
    <source>
        <strain>ATCC 27184 / PCC 6803 / Kazusa</strain>
    </source>
</reference>
<proteinExistence type="inferred from homology"/>
<feature type="chain" id="PRO_0000138601" description="Peptide methionine sulfoxide reductase MsrA 1">
    <location>
        <begin position="1"/>
        <end position="222"/>
    </location>
</feature>
<feature type="active site" evidence="1">
    <location>
        <position position="57"/>
    </location>
</feature>
<evidence type="ECO:0000250" key="1"/>
<evidence type="ECO:0000305" key="2"/>
<gene>
    <name type="primary">msrA1</name>
    <name type="ordered locus">sll1394</name>
</gene>
<dbReference type="EC" id="1.8.4.11"/>
<dbReference type="EMBL" id="BA000022">
    <property type="protein sequence ID" value="BAA16624.1"/>
    <property type="molecule type" value="Genomic_DNA"/>
</dbReference>
<dbReference type="PIR" id="S74472">
    <property type="entry name" value="S74472"/>
</dbReference>
<dbReference type="SMR" id="P72622"/>
<dbReference type="FunCoup" id="P72622">
    <property type="interactions" value="341"/>
</dbReference>
<dbReference type="IntAct" id="P72622">
    <property type="interactions" value="5"/>
</dbReference>
<dbReference type="STRING" id="1148.gene:10497479"/>
<dbReference type="PaxDb" id="1148-1651696"/>
<dbReference type="EnsemblBacteria" id="BAA16624">
    <property type="protein sequence ID" value="BAA16624"/>
    <property type="gene ID" value="BAA16624"/>
</dbReference>
<dbReference type="KEGG" id="syn:sll1394"/>
<dbReference type="eggNOG" id="COG0225">
    <property type="taxonomic scope" value="Bacteria"/>
</dbReference>
<dbReference type="InParanoid" id="P72622"/>
<dbReference type="PhylomeDB" id="P72622"/>
<dbReference type="Proteomes" id="UP000001425">
    <property type="component" value="Chromosome"/>
</dbReference>
<dbReference type="GO" id="GO:0005737">
    <property type="term" value="C:cytoplasm"/>
    <property type="evidence" value="ECO:0000318"/>
    <property type="project" value="GO_Central"/>
</dbReference>
<dbReference type="GO" id="GO:0036456">
    <property type="term" value="F:L-methionine-(S)-S-oxide reductase activity"/>
    <property type="evidence" value="ECO:0000318"/>
    <property type="project" value="GO_Central"/>
</dbReference>
<dbReference type="GO" id="GO:0008113">
    <property type="term" value="F:peptide-methionine (S)-S-oxide reductase activity"/>
    <property type="evidence" value="ECO:0000318"/>
    <property type="project" value="GO_Central"/>
</dbReference>
<dbReference type="GO" id="GO:0034599">
    <property type="term" value="P:cellular response to oxidative stress"/>
    <property type="evidence" value="ECO:0000318"/>
    <property type="project" value="GO_Central"/>
</dbReference>
<dbReference type="GO" id="GO:0036211">
    <property type="term" value="P:protein modification process"/>
    <property type="evidence" value="ECO:0007669"/>
    <property type="project" value="UniProtKB-UniRule"/>
</dbReference>
<dbReference type="FunFam" id="3.30.1060.10:FF:000001">
    <property type="entry name" value="Peptide methionine sulfoxide reductase MsrA"/>
    <property type="match status" value="1"/>
</dbReference>
<dbReference type="Gene3D" id="3.30.1060.10">
    <property type="entry name" value="Peptide methionine sulphoxide reductase MsrA"/>
    <property type="match status" value="1"/>
</dbReference>
<dbReference type="HAMAP" id="MF_01401">
    <property type="entry name" value="MsrA"/>
    <property type="match status" value="1"/>
</dbReference>
<dbReference type="InterPro" id="IPR002569">
    <property type="entry name" value="Met_Sox_Rdtase_MsrA_dom"/>
</dbReference>
<dbReference type="InterPro" id="IPR036509">
    <property type="entry name" value="Met_Sox_Rdtase_MsrA_sf"/>
</dbReference>
<dbReference type="InterPro" id="IPR050162">
    <property type="entry name" value="MsrA_MetSO_reductase"/>
</dbReference>
<dbReference type="NCBIfam" id="TIGR00401">
    <property type="entry name" value="msrA"/>
    <property type="match status" value="1"/>
</dbReference>
<dbReference type="PANTHER" id="PTHR42799">
    <property type="entry name" value="MITOCHONDRIAL PEPTIDE METHIONINE SULFOXIDE REDUCTASE"/>
    <property type="match status" value="1"/>
</dbReference>
<dbReference type="PANTHER" id="PTHR42799:SF2">
    <property type="entry name" value="MITOCHONDRIAL PEPTIDE METHIONINE SULFOXIDE REDUCTASE"/>
    <property type="match status" value="1"/>
</dbReference>
<dbReference type="Pfam" id="PF01625">
    <property type="entry name" value="PMSR"/>
    <property type="match status" value="1"/>
</dbReference>
<dbReference type="SUPFAM" id="SSF55068">
    <property type="entry name" value="Peptide methionine sulfoxide reductase"/>
    <property type="match status" value="1"/>
</dbReference>
<protein>
    <recommendedName>
        <fullName>Peptide methionine sulfoxide reductase MsrA 1</fullName>
        <shortName>Protein-methionine-S-oxide reductase 1</shortName>
        <ecNumber>1.8.4.11</ecNumber>
    </recommendedName>
    <alternativeName>
        <fullName>Peptide-methionine (S)-S-oxide reductase 1</fullName>
        <shortName>Peptide Met(O) reductase 1</shortName>
    </alternativeName>
</protein>